<name>COX1_CRAZI</name>
<organism>
    <name type="scientific">Cratogeomys zinseri</name>
    <name type="common">Zinser's pocket gopher</name>
    <name type="synonym">Pappogeomys zinseri</name>
    <dbReference type="NCBI Taxonomy" id="164517"/>
    <lineage>
        <taxon>Eukaryota</taxon>
        <taxon>Metazoa</taxon>
        <taxon>Chordata</taxon>
        <taxon>Craniata</taxon>
        <taxon>Vertebrata</taxon>
        <taxon>Euteleostomi</taxon>
        <taxon>Mammalia</taxon>
        <taxon>Eutheria</taxon>
        <taxon>Euarchontoglires</taxon>
        <taxon>Glires</taxon>
        <taxon>Rodentia</taxon>
        <taxon>Castorimorpha</taxon>
        <taxon>Geomyidae</taxon>
        <taxon>Cratogeomys</taxon>
    </lineage>
</organism>
<comment type="function">
    <text evidence="3">Component of the cytochrome c oxidase, the last enzyme in the mitochondrial electron transport chain which drives oxidative phosphorylation. The respiratory chain contains 3 multisubunit complexes succinate dehydrogenase (complex II, CII), ubiquinol-cytochrome c oxidoreductase (cytochrome b-c1 complex, complex III, CIII) and cytochrome c oxidase (complex IV, CIV), that cooperate to transfer electrons derived from NADH and succinate to molecular oxygen, creating an electrochemical gradient over the inner membrane that drives transmembrane transport and the ATP synthase. Cytochrome c oxidase is the component of the respiratory chain that catalyzes the reduction of oxygen to water. Electrons originating from reduced cytochrome c in the intermembrane space (IMS) are transferred via the dinuclear copper A center (CU(A)) of subunit 2 and heme A of subunit 1 to the active site in subunit 1, a binuclear center (BNC) formed by heme A3 and copper B (CU(B)). The BNC reduces molecular oxygen to 2 water molecules using 4 electrons from cytochrome c in the IMS and 4 protons from the mitochondrial matrix.</text>
</comment>
<comment type="catalytic activity">
    <reaction evidence="3">
        <text>4 Fe(II)-[cytochrome c] + O2 + 8 H(+)(in) = 4 Fe(III)-[cytochrome c] + 2 H2O + 4 H(+)(out)</text>
        <dbReference type="Rhea" id="RHEA:11436"/>
        <dbReference type="Rhea" id="RHEA-COMP:10350"/>
        <dbReference type="Rhea" id="RHEA-COMP:14399"/>
        <dbReference type="ChEBI" id="CHEBI:15377"/>
        <dbReference type="ChEBI" id="CHEBI:15378"/>
        <dbReference type="ChEBI" id="CHEBI:15379"/>
        <dbReference type="ChEBI" id="CHEBI:29033"/>
        <dbReference type="ChEBI" id="CHEBI:29034"/>
        <dbReference type="EC" id="7.1.1.9"/>
    </reaction>
    <physiologicalReaction direction="left-to-right" evidence="3">
        <dbReference type="Rhea" id="RHEA:11437"/>
    </physiologicalReaction>
</comment>
<comment type="cofactor">
    <cofactor evidence="2">
        <name>heme</name>
        <dbReference type="ChEBI" id="CHEBI:30413"/>
    </cofactor>
    <text evidence="2">Binds 2 heme A groups non-covalently per subunit.</text>
</comment>
<comment type="cofactor">
    <cofactor evidence="2">
        <name>Cu cation</name>
        <dbReference type="ChEBI" id="CHEBI:23378"/>
    </cofactor>
    <text evidence="2">Binds a copper B center.</text>
</comment>
<comment type="pathway">
    <text evidence="3">Energy metabolism; oxidative phosphorylation.</text>
</comment>
<comment type="subunit">
    <text evidence="1 2">Component of the cytochrome c oxidase (complex IV, CIV), a multisubunit enzyme composed of 14 subunits. The complex is composed of a catalytic core of 3 subunits MT-CO1, MT-CO2 and MT-CO3, encoded in the mitochondrial DNA, and 11 supernumerary subunits COX4I, COX5A, COX5B, COX6A, COX6B, COX6C, COX7A, COX7B, COX7C, COX8 and NDUFA4, which are encoded in the nuclear genome. The complex exists as a monomer or a dimer and forms supercomplexes (SCs) in the inner mitochondrial membrane with NADH-ubiquinone oxidoreductase (complex I, CI) and ubiquinol-cytochrome c oxidoreductase (cytochrome b-c1 complex, complex III, CIII), resulting in different assemblies (supercomplex SCI(1)III(2)IV(1) and megacomplex MCI(2)III(2)IV(2)) (By similarity). As a newly synthesized protein, rapidly incorporates into a multi-subunit assembly intermediate in the inner membrane, called MITRAC (mitochondrial translation regulation assembly intermediate of cytochrome c oxidase) complex, whose core components are COA3/MITRAC12 and COX14. Within the MITRAC complex, interacts with COA3 and with SMIM20/MITRAC7; the interaction with SMIM20 stabilizes the newly synthesized MT-CO1 and prevents its premature turnover. Interacts with TMEM177 in a COX20-dependent manner (By similarity).</text>
</comment>
<comment type="subcellular location">
    <subcellularLocation>
        <location evidence="2">Mitochondrion inner membrane</location>
        <topology evidence="2">Multi-pass membrane protein</topology>
    </subcellularLocation>
</comment>
<comment type="similarity">
    <text evidence="4">Belongs to the heme-copper respiratory oxidase family.</text>
</comment>
<reference key="1">
    <citation type="journal article" date="2004" name="J. Mammal. Evol.">
        <title>DNA data support a rapid radiation of pocket gopher genera.</title>
        <authorList>
            <person name="Spradling T.A."/>
            <person name="Brant S.V."/>
            <person name="Hafner M.S."/>
            <person name="Dickerson C.J."/>
        </authorList>
    </citation>
    <scope>NUCLEOTIDE SEQUENCE [GENOMIC DNA]</scope>
</reference>
<accession>Q6EGJ0</accession>
<proteinExistence type="inferred from homology"/>
<geneLocation type="mitochondrion"/>
<sequence length="516" mass="57127">MFINRWLFSTNHKDIGTLYMIFGAWAGMVGTGLSILIRAELGQPGSLLGDDQIYNVVVTAHAFVMIFFMVMPIMIGGFGNWLVPLMIGAPDMAFPRMNNMSFWLLPPSFLLLLSSSMVEAGAGTGWTVYPPLAGNLAHAGASVDLTIFSLHLAGVSSILGAINFITTIINMKPPAITQYQTPLFVWSVMITAVLLLLSLPVLAAGITMLLTDRNLNTTFFDPAGGGDPILYQHLFWFFGHPEVYILILPGFGMISHIVTYYSGKKEPFGYMGMVWAMMSIGFLGFIVWAHHMFTVGMDVDTRAYFTSATMIIAIPTGVKVFSWLATLHGGNIKWSPAMLWALGFIFLFTIGGLTGIVLSNSSLDIVLHDTYYVVAHFHYVLSMGAVFAIMGGFVHWFPLFTGYTLNDTWAKIHFTIMFVGVNMTFFPQHFLGLAGMPRRYSDYPDAYTTWNTISSMGSFISLTAVILMVFIIWEALASKRVVKSIPLTSTNLEWMHGCPPPFHTFEEPAFIKSSIK</sequence>
<keyword id="KW-0106">Calcium</keyword>
<keyword id="KW-0186">Copper</keyword>
<keyword id="KW-0249">Electron transport</keyword>
<keyword id="KW-0349">Heme</keyword>
<keyword id="KW-0408">Iron</keyword>
<keyword id="KW-0460">Magnesium</keyword>
<keyword id="KW-0472">Membrane</keyword>
<keyword id="KW-0479">Metal-binding</keyword>
<keyword id="KW-0496">Mitochondrion</keyword>
<keyword id="KW-0999">Mitochondrion inner membrane</keyword>
<keyword id="KW-0679">Respiratory chain</keyword>
<keyword id="KW-0915">Sodium</keyword>
<keyword id="KW-1278">Translocase</keyword>
<keyword id="KW-0812">Transmembrane</keyword>
<keyword id="KW-1133">Transmembrane helix</keyword>
<keyword id="KW-0813">Transport</keyword>
<gene>
    <name type="primary">MT-CO1</name>
    <name type="synonym">COI</name>
    <name type="synonym">COXI</name>
    <name type="synonym">MTCO1</name>
</gene>
<dbReference type="EC" id="7.1.1.9"/>
<dbReference type="EMBL" id="AY331074">
    <property type="protein sequence ID" value="AAR02575.1"/>
    <property type="molecule type" value="Genomic_DNA"/>
</dbReference>
<dbReference type="SMR" id="Q6EGJ0"/>
<dbReference type="UniPathway" id="UPA00705"/>
<dbReference type="GO" id="GO:0005743">
    <property type="term" value="C:mitochondrial inner membrane"/>
    <property type="evidence" value="ECO:0007669"/>
    <property type="project" value="UniProtKB-SubCell"/>
</dbReference>
<dbReference type="GO" id="GO:0045277">
    <property type="term" value="C:respiratory chain complex IV"/>
    <property type="evidence" value="ECO:0000250"/>
    <property type="project" value="UniProtKB"/>
</dbReference>
<dbReference type="GO" id="GO:0004129">
    <property type="term" value="F:cytochrome-c oxidase activity"/>
    <property type="evidence" value="ECO:0007669"/>
    <property type="project" value="UniProtKB-EC"/>
</dbReference>
<dbReference type="GO" id="GO:0020037">
    <property type="term" value="F:heme binding"/>
    <property type="evidence" value="ECO:0007669"/>
    <property type="project" value="InterPro"/>
</dbReference>
<dbReference type="GO" id="GO:0046872">
    <property type="term" value="F:metal ion binding"/>
    <property type="evidence" value="ECO:0007669"/>
    <property type="project" value="UniProtKB-KW"/>
</dbReference>
<dbReference type="GO" id="GO:0015990">
    <property type="term" value="P:electron transport coupled proton transport"/>
    <property type="evidence" value="ECO:0007669"/>
    <property type="project" value="TreeGrafter"/>
</dbReference>
<dbReference type="GO" id="GO:0006123">
    <property type="term" value="P:mitochondrial electron transport, cytochrome c to oxygen"/>
    <property type="evidence" value="ECO:0007669"/>
    <property type="project" value="TreeGrafter"/>
</dbReference>
<dbReference type="CDD" id="cd01663">
    <property type="entry name" value="Cyt_c_Oxidase_I"/>
    <property type="match status" value="1"/>
</dbReference>
<dbReference type="FunFam" id="1.20.210.10:FF:000001">
    <property type="entry name" value="Cytochrome c oxidase subunit 1"/>
    <property type="match status" value="1"/>
</dbReference>
<dbReference type="Gene3D" id="1.20.210.10">
    <property type="entry name" value="Cytochrome c oxidase-like, subunit I domain"/>
    <property type="match status" value="1"/>
</dbReference>
<dbReference type="InterPro" id="IPR023616">
    <property type="entry name" value="Cyt_c_oxase-like_su1_dom"/>
</dbReference>
<dbReference type="InterPro" id="IPR036927">
    <property type="entry name" value="Cyt_c_oxase-like_su1_sf"/>
</dbReference>
<dbReference type="InterPro" id="IPR000883">
    <property type="entry name" value="Cyt_C_Oxase_1"/>
</dbReference>
<dbReference type="InterPro" id="IPR023615">
    <property type="entry name" value="Cyt_c_Oxase_su1_BS"/>
</dbReference>
<dbReference type="InterPro" id="IPR033944">
    <property type="entry name" value="Cyt_c_oxase_su1_dom"/>
</dbReference>
<dbReference type="PANTHER" id="PTHR10422">
    <property type="entry name" value="CYTOCHROME C OXIDASE SUBUNIT 1"/>
    <property type="match status" value="1"/>
</dbReference>
<dbReference type="PANTHER" id="PTHR10422:SF18">
    <property type="entry name" value="CYTOCHROME C OXIDASE SUBUNIT 1"/>
    <property type="match status" value="1"/>
</dbReference>
<dbReference type="Pfam" id="PF00115">
    <property type="entry name" value="COX1"/>
    <property type="match status" value="1"/>
</dbReference>
<dbReference type="PRINTS" id="PR01165">
    <property type="entry name" value="CYCOXIDASEI"/>
</dbReference>
<dbReference type="SUPFAM" id="SSF81442">
    <property type="entry name" value="Cytochrome c oxidase subunit I-like"/>
    <property type="match status" value="1"/>
</dbReference>
<dbReference type="PROSITE" id="PS50855">
    <property type="entry name" value="COX1"/>
    <property type="match status" value="1"/>
</dbReference>
<dbReference type="PROSITE" id="PS00077">
    <property type="entry name" value="COX1_CUB"/>
    <property type="match status" value="1"/>
</dbReference>
<feature type="chain" id="PRO_0000254909" description="Cytochrome c oxidase subunit 1">
    <location>
        <begin position="1"/>
        <end position="516"/>
    </location>
</feature>
<feature type="topological domain" description="Mitochondrial matrix" evidence="2">
    <location>
        <begin position="1"/>
        <end position="11"/>
    </location>
</feature>
<feature type="transmembrane region" description="Helical; Name=I" evidence="2">
    <location>
        <begin position="12"/>
        <end position="40"/>
    </location>
</feature>
<feature type="topological domain" description="Mitochondrial intermembrane" evidence="2">
    <location>
        <begin position="41"/>
        <end position="50"/>
    </location>
</feature>
<feature type="transmembrane region" description="Helical; Name=II" evidence="2">
    <location>
        <begin position="51"/>
        <end position="86"/>
    </location>
</feature>
<feature type="topological domain" description="Mitochondrial matrix" evidence="2">
    <location>
        <begin position="87"/>
        <end position="94"/>
    </location>
</feature>
<feature type="transmembrane region" description="Helical; Name=III" evidence="2">
    <location>
        <begin position="95"/>
        <end position="117"/>
    </location>
</feature>
<feature type="topological domain" description="Mitochondrial intermembrane" evidence="2">
    <location>
        <begin position="118"/>
        <end position="140"/>
    </location>
</feature>
<feature type="transmembrane region" description="Helical; Name=IV" evidence="2">
    <location>
        <begin position="141"/>
        <end position="170"/>
    </location>
</feature>
<feature type="topological domain" description="Mitochondrial matrix" evidence="2">
    <location>
        <begin position="171"/>
        <end position="182"/>
    </location>
</feature>
<feature type="transmembrane region" description="Helical; Name=V" evidence="2">
    <location>
        <begin position="183"/>
        <end position="212"/>
    </location>
</feature>
<feature type="topological domain" description="Mitochondrial intermembrane" evidence="2">
    <location>
        <begin position="213"/>
        <end position="227"/>
    </location>
</feature>
<feature type="transmembrane region" description="Helical; Name=VI" evidence="2">
    <location>
        <begin position="228"/>
        <end position="261"/>
    </location>
</feature>
<feature type="topological domain" description="Mitochondrial matrix" evidence="2">
    <location>
        <begin position="262"/>
        <end position="269"/>
    </location>
</feature>
<feature type="transmembrane region" description="Helical; Name=VII" evidence="2">
    <location>
        <begin position="270"/>
        <end position="286"/>
    </location>
</feature>
<feature type="topological domain" description="Mitochondrial intermembrane" evidence="2">
    <location>
        <begin position="287"/>
        <end position="298"/>
    </location>
</feature>
<feature type="transmembrane region" description="Helical; Name=VIII" evidence="2">
    <location>
        <begin position="299"/>
        <end position="327"/>
    </location>
</feature>
<feature type="topological domain" description="Mitochondrial matrix" evidence="2">
    <location>
        <begin position="328"/>
        <end position="335"/>
    </location>
</feature>
<feature type="transmembrane region" description="Helical; Name=IX" evidence="2">
    <location>
        <begin position="336"/>
        <end position="357"/>
    </location>
</feature>
<feature type="topological domain" description="Mitochondrial intermembrane" evidence="2">
    <location>
        <begin position="358"/>
        <end position="370"/>
    </location>
</feature>
<feature type="transmembrane region" description="Helical; Name=X" evidence="2">
    <location>
        <begin position="371"/>
        <end position="400"/>
    </location>
</feature>
<feature type="topological domain" description="Mitochondrial matrix" evidence="2">
    <location>
        <begin position="401"/>
        <end position="406"/>
    </location>
</feature>
<feature type="transmembrane region" description="Helical; Name=XI" evidence="2">
    <location>
        <begin position="407"/>
        <end position="433"/>
    </location>
</feature>
<feature type="topological domain" description="Mitochondrial intermembrane" evidence="2">
    <location>
        <begin position="434"/>
        <end position="446"/>
    </location>
</feature>
<feature type="transmembrane region" description="Helical; Name=XII" evidence="2">
    <location>
        <begin position="447"/>
        <end position="478"/>
    </location>
</feature>
<feature type="topological domain" description="Mitochondrial matrix" evidence="2">
    <location>
        <begin position="479"/>
        <end position="516"/>
    </location>
</feature>
<feature type="binding site" evidence="2">
    <location>
        <position position="40"/>
    </location>
    <ligand>
        <name>Na(+)</name>
        <dbReference type="ChEBI" id="CHEBI:29101"/>
    </ligand>
</feature>
<feature type="binding site" evidence="2">
    <location>
        <position position="45"/>
    </location>
    <ligand>
        <name>Na(+)</name>
        <dbReference type="ChEBI" id="CHEBI:29101"/>
    </ligand>
</feature>
<feature type="binding site" description="axial binding residue" evidence="2">
    <location>
        <position position="61"/>
    </location>
    <ligand>
        <name>Fe(II)-heme a</name>
        <dbReference type="ChEBI" id="CHEBI:61715"/>
        <note>low-spin</note>
    </ligand>
    <ligandPart>
        <name>Fe</name>
        <dbReference type="ChEBI" id="CHEBI:18248"/>
    </ligandPart>
</feature>
<feature type="binding site" evidence="2">
    <location>
        <position position="240"/>
    </location>
    <ligand>
        <name>Cu cation</name>
        <dbReference type="ChEBI" id="CHEBI:23378"/>
        <label>B</label>
    </ligand>
</feature>
<feature type="binding site" evidence="2">
    <location>
        <position position="244"/>
    </location>
    <ligand>
        <name>O2</name>
        <dbReference type="ChEBI" id="CHEBI:15379"/>
    </ligand>
</feature>
<feature type="binding site" evidence="2">
    <location>
        <position position="290"/>
    </location>
    <ligand>
        <name>Cu cation</name>
        <dbReference type="ChEBI" id="CHEBI:23378"/>
        <label>B</label>
    </ligand>
</feature>
<feature type="binding site" evidence="2">
    <location>
        <position position="291"/>
    </location>
    <ligand>
        <name>Cu cation</name>
        <dbReference type="ChEBI" id="CHEBI:23378"/>
        <label>B</label>
    </ligand>
</feature>
<feature type="binding site" evidence="2">
    <location>
        <position position="368"/>
    </location>
    <ligand>
        <name>Mg(2+)</name>
        <dbReference type="ChEBI" id="CHEBI:18420"/>
        <note>ligand shared with MT-CO2</note>
    </ligand>
</feature>
<feature type="binding site" evidence="2">
    <location>
        <position position="369"/>
    </location>
    <ligand>
        <name>Mg(2+)</name>
        <dbReference type="ChEBI" id="CHEBI:18420"/>
        <note>ligand shared with MT-CO2</note>
    </ligand>
</feature>
<feature type="binding site" description="axial binding residue" evidence="2">
    <location>
        <position position="376"/>
    </location>
    <ligand>
        <name>heme a3</name>
        <dbReference type="ChEBI" id="CHEBI:83282"/>
        <note>high-spin</note>
    </ligand>
    <ligandPart>
        <name>Fe</name>
        <dbReference type="ChEBI" id="CHEBI:18248"/>
    </ligandPart>
</feature>
<feature type="binding site" description="axial binding residue" evidence="2">
    <location>
        <position position="378"/>
    </location>
    <ligand>
        <name>Fe(II)-heme a</name>
        <dbReference type="ChEBI" id="CHEBI:61715"/>
        <note>low-spin</note>
    </ligand>
    <ligandPart>
        <name>Fe</name>
        <dbReference type="ChEBI" id="CHEBI:18248"/>
    </ligandPart>
</feature>
<feature type="binding site" evidence="2">
    <location>
        <position position="441"/>
    </location>
    <ligand>
        <name>Na(+)</name>
        <dbReference type="ChEBI" id="CHEBI:29101"/>
    </ligand>
</feature>
<feature type="cross-link" description="1'-histidyl-3'-tyrosine (His-Tyr)" evidence="2">
    <location>
        <begin position="240"/>
        <end position="244"/>
    </location>
</feature>
<evidence type="ECO:0000250" key="1">
    <source>
        <dbReference type="UniProtKB" id="P00395"/>
    </source>
</evidence>
<evidence type="ECO:0000250" key="2">
    <source>
        <dbReference type="UniProtKB" id="P00396"/>
    </source>
</evidence>
<evidence type="ECO:0000250" key="3">
    <source>
        <dbReference type="UniProtKB" id="P00401"/>
    </source>
</evidence>
<evidence type="ECO:0000305" key="4"/>
<protein>
    <recommendedName>
        <fullName>Cytochrome c oxidase subunit 1</fullName>
        <ecNumber>7.1.1.9</ecNumber>
    </recommendedName>
    <alternativeName>
        <fullName>Cytochrome c oxidase polypeptide I</fullName>
    </alternativeName>
</protein>